<evidence type="ECO:0000250" key="1"/>
<evidence type="ECO:0000250" key="2">
    <source>
        <dbReference type="UniProtKB" id="Q6PIC6"/>
    </source>
</evidence>
<evidence type="ECO:0000255" key="3"/>
<evidence type="ECO:0000256" key="4">
    <source>
        <dbReference type="SAM" id="MobiDB-lite"/>
    </source>
</evidence>
<evidence type="ECO:0000269" key="5">
    <source>
    </source>
</evidence>
<evidence type="ECO:0000305" key="6"/>
<evidence type="ECO:0007744" key="7">
    <source>
    </source>
</evidence>
<name>AT1A3_RAT</name>
<reference key="1">
    <citation type="journal article" date="1986" name="Biochemistry">
        <title>Molecular cloning of three distinct forms of the Na+,K+-ATPase alpha-subunit from rat brain.</title>
        <authorList>
            <person name="Shull G.E."/>
            <person name="Greeb J."/>
            <person name="Lingrel J.B."/>
        </authorList>
    </citation>
    <scope>NUCLEOTIDE SEQUENCE [MRNA]</scope>
</reference>
<reference key="2">
    <citation type="journal article" date="1987" name="J. Biochem.">
        <title>Primary structures of two types of alpha-subunit of rat brain Na+,K+,-ATPase deduced from cDNA sequences.</title>
        <authorList>
            <person name="Hara Y."/>
            <person name="Urayama O."/>
            <person name="Kawakami K."/>
            <person name="Nojima H."/>
            <person name="Nagamune H."/>
            <person name="Kojima T."/>
            <person name="Ohta T."/>
            <person name="Nagano K."/>
            <person name="Nakao M."/>
        </authorList>
    </citation>
    <scope>NUCLEOTIDE SEQUENCE [MRNA]</scope>
    <source>
        <tissue>Brain</tissue>
    </source>
</reference>
<reference key="3">
    <citation type="journal article" date="1987" name="J. Cell Biol.">
        <title>Three differentially expressed Na,K-ATPase alpha subunit isoforms: structural and functional implications.</title>
        <authorList>
            <person name="Herrera V.L.M."/>
            <person name="Emanuel J.R."/>
            <person name="Ruiz-Opazo N."/>
            <person name="Levenson R."/>
            <person name="Nadal-Ginard B."/>
        </authorList>
    </citation>
    <scope>NUCLEOTIDE SEQUENCE [MRNA] OF 1-930</scope>
    <source>
        <tissue>Brain</tissue>
        <tissue>Liver</tissue>
    </source>
</reference>
<reference key="4">
    <citation type="submission" date="2007-07" db="UniProtKB">
        <authorList>
            <person name="Lubec G."/>
            <person name="Kang S.U."/>
        </authorList>
    </citation>
    <scope>PROTEIN SEQUENCE OF 58-64; 147-152; 246-254; 260-271; 425-434; 436-448; 517-525; 587-595; 620-648; 734-763 AND 878-883</scope>
    <scope>IDENTIFICATION BY MASS SPECTROMETRY</scope>
    <source>
        <strain>Sprague-Dawley</strain>
        <tissue>Brain</tissue>
    </source>
</reference>
<reference key="5">
    <citation type="journal article" date="2012" name="Nat. Commun.">
        <title>Quantitative maps of protein phosphorylation sites across 14 different rat organs and tissues.</title>
        <authorList>
            <person name="Lundby A."/>
            <person name="Secher A."/>
            <person name="Lage K."/>
            <person name="Nordsborg N.B."/>
            <person name="Dmytriyev A."/>
            <person name="Lundby C."/>
            <person name="Olsen J.V."/>
        </authorList>
    </citation>
    <scope>PHOSPHORYLATION [LARGE SCALE ANALYSIS] AT SER-37; SER-218 AND SER-442</scope>
    <scope>IDENTIFICATION BY MASS SPECTROMETRY [LARGE SCALE ANALYSIS]</scope>
</reference>
<reference key="6">
    <citation type="journal article" date="2013" name="J. Biol. Chem.">
        <title>A separate pool of cardiac phospholemman that does not regulate or associate with the sodium pump: multimers of phospholemman in ventricular muscle.</title>
        <authorList>
            <person name="Wypijewski K.J."/>
            <person name="Howie J."/>
            <person name="Reilly L."/>
            <person name="Tulloch L.B."/>
            <person name="Aughton K.L."/>
            <person name="McLatchie L.M."/>
            <person name="Shattock M.J."/>
            <person name="Calaghan S.C."/>
            <person name="Fuller W."/>
        </authorList>
    </citation>
    <scope>INTERACTION WITH FXYD1</scope>
</reference>
<comment type="function">
    <text>This is the catalytic component of the active enzyme, which catalyzes the hydrolysis of ATP coupled with the exchange of sodium and potassium ions across the plasma membrane. This action creates the electrochemical gradient of sodium and potassium ions, providing the energy for active transport of various nutrients.</text>
</comment>
<comment type="catalytic activity">
    <reaction>
        <text>K(+)(out) + Na(+)(in) + ATP + H2O = K(+)(in) + Na(+)(out) + ADP + phosphate + H(+)</text>
        <dbReference type="Rhea" id="RHEA:18353"/>
        <dbReference type="ChEBI" id="CHEBI:15377"/>
        <dbReference type="ChEBI" id="CHEBI:15378"/>
        <dbReference type="ChEBI" id="CHEBI:29101"/>
        <dbReference type="ChEBI" id="CHEBI:29103"/>
        <dbReference type="ChEBI" id="CHEBI:30616"/>
        <dbReference type="ChEBI" id="CHEBI:43474"/>
        <dbReference type="ChEBI" id="CHEBI:456216"/>
        <dbReference type="EC" id="7.2.2.13"/>
    </reaction>
</comment>
<comment type="subunit">
    <text evidence="5">The sodium/potassium-transporting ATPase is composed of a catalytic alpha subunit, an auxiliary non-catalytic beta subunit and an additional regulatory subunit. Interacts with regulatory subunit FXYD1.</text>
</comment>
<comment type="subcellular location">
    <subcellularLocation>
        <location evidence="1">Cell membrane</location>
        <topology evidence="1">Multi-pass membrane protein</topology>
    </subcellularLocation>
</comment>
<comment type="similarity">
    <text evidence="6">Belongs to the cation transport ATPase (P-type) (TC 3.A.3) family. Type IIC subfamily.</text>
</comment>
<keyword id="KW-0067">ATP-binding</keyword>
<keyword id="KW-1003">Cell membrane</keyword>
<keyword id="KW-0903">Direct protein sequencing</keyword>
<keyword id="KW-0406">Ion transport</keyword>
<keyword id="KW-0460">Magnesium</keyword>
<keyword id="KW-0472">Membrane</keyword>
<keyword id="KW-0479">Metal-binding</keyword>
<keyword id="KW-0547">Nucleotide-binding</keyword>
<keyword id="KW-0597">Phosphoprotein</keyword>
<keyword id="KW-0630">Potassium</keyword>
<keyword id="KW-0633">Potassium transport</keyword>
<keyword id="KW-1185">Reference proteome</keyword>
<keyword id="KW-0915">Sodium</keyword>
<keyword id="KW-0739">Sodium transport</keyword>
<keyword id="KW-0740">Sodium/potassium transport</keyword>
<keyword id="KW-1278">Translocase</keyword>
<keyword id="KW-0812">Transmembrane</keyword>
<keyword id="KW-1133">Transmembrane helix</keyword>
<keyword id="KW-0813">Transport</keyword>
<proteinExistence type="evidence at protein level"/>
<dbReference type="EC" id="7.2.2.13"/>
<dbReference type="EMBL" id="M14513">
    <property type="protein sequence ID" value="AAA40777.1"/>
    <property type="molecule type" value="mRNA"/>
</dbReference>
<dbReference type="EMBL" id="X05883">
    <property type="protein sequence ID" value="CAA29307.1"/>
    <property type="molecule type" value="mRNA"/>
</dbReference>
<dbReference type="EMBL" id="M28648">
    <property type="protein sequence ID" value="AAA41672.1"/>
    <property type="molecule type" value="mRNA"/>
</dbReference>
<dbReference type="PIR" id="C24639">
    <property type="entry name" value="C24639"/>
</dbReference>
<dbReference type="RefSeq" id="NP_036638.1">
    <property type="nucleotide sequence ID" value="NM_012506.1"/>
</dbReference>
<dbReference type="SMR" id="P06687"/>
<dbReference type="BioGRID" id="246401">
    <property type="interactions" value="10"/>
</dbReference>
<dbReference type="FunCoup" id="P06687">
    <property type="interactions" value="1293"/>
</dbReference>
<dbReference type="IntAct" id="P06687">
    <property type="interactions" value="4"/>
</dbReference>
<dbReference type="MINT" id="P06687"/>
<dbReference type="STRING" id="10116.ENSRNOP00000027497"/>
<dbReference type="BindingDB" id="P06687"/>
<dbReference type="ChEMBL" id="CHEMBL3885640"/>
<dbReference type="ChEMBL" id="CHEMBL4106149"/>
<dbReference type="CarbonylDB" id="P06687"/>
<dbReference type="GlyGen" id="P06687">
    <property type="glycosylation" value="1 site, 1 N-linked;o-linked glycan (1 site)"/>
</dbReference>
<dbReference type="iPTMnet" id="P06687"/>
<dbReference type="PhosphoSitePlus" id="P06687"/>
<dbReference type="jPOST" id="P06687"/>
<dbReference type="PaxDb" id="10116-ENSRNOP00000027497"/>
<dbReference type="GeneID" id="24213"/>
<dbReference type="KEGG" id="rno:24213"/>
<dbReference type="UCSC" id="RGD:2169">
    <property type="organism name" value="rat"/>
</dbReference>
<dbReference type="AGR" id="RGD:2169"/>
<dbReference type="CTD" id="478"/>
<dbReference type="RGD" id="2169">
    <property type="gene designation" value="Atp1a3"/>
</dbReference>
<dbReference type="VEuPathDB" id="HostDB:ENSRNOG00000020263"/>
<dbReference type="eggNOG" id="KOG0203">
    <property type="taxonomic scope" value="Eukaryota"/>
</dbReference>
<dbReference type="HOGENOM" id="CLU_002360_4_3_1"/>
<dbReference type="InParanoid" id="P06687"/>
<dbReference type="Reactome" id="R-RNO-5578775">
    <property type="pathway name" value="Ion homeostasis"/>
</dbReference>
<dbReference type="Reactome" id="R-RNO-936837">
    <property type="pathway name" value="Ion transport by P-type ATPases"/>
</dbReference>
<dbReference type="SABIO-RK" id="P06687"/>
<dbReference type="PRO" id="PR:P06687"/>
<dbReference type="Proteomes" id="UP000002494">
    <property type="component" value="Chromosome 1"/>
</dbReference>
<dbReference type="Bgee" id="ENSRNOG00000020263">
    <property type="expression patterns" value="Expressed in cerebellum and 18 other cell types or tissues"/>
</dbReference>
<dbReference type="GO" id="GO:0030424">
    <property type="term" value="C:axon"/>
    <property type="evidence" value="ECO:0000314"/>
    <property type="project" value="RGD"/>
</dbReference>
<dbReference type="GO" id="GO:0044305">
    <property type="term" value="C:calyx of Held"/>
    <property type="evidence" value="ECO:0000314"/>
    <property type="project" value="SynGO"/>
</dbReference>
<dbReference type="GO" id="GO:0009986">
    <property type="term" value="C:cell surface"/>
    <property type="evidence" value="ECO:0000266"/>
    <property type="project" value="RGD"/>
</dbReference>
<dbReference type="GO" id="GO:0005737">
    <property type="term" value="C:cytoplasm"/>
    <property type="evidence" value="ECO:0000266"/>
    <property type="project" value="RGD"/>
</dbReference>
<dbReference type="GO" id="GO:0044327">
    <property type="term" value="C:dendritic spine head"/>
    <property type="evidence" value="ECO:0000314"/>
    <property type="project" value="RGD"/>
</dbReference>
<dbReference type="GO" id="GO:0044326">
    <property type="term" value="C:dendritic spine neck"/>
    <property type="evidence" value="ECO:0000314"/>
    <property type="project" value="RGD"/>
</dbReference>
<dbReference type="GO" id="GO:0005783">
    <property type="term" value="C:endoplasmic reticulum"/>
    <property type="evidence" value="ECO:0000250"/>
    <property type="project" value="UniProtKB"/>
</dbReference>
<dbReference type="GO" id="GO:0005794">
    <property type="term" value="C:Golgi apparatus"/>
    <property type="evidence" value="ECO:0000250"/>
    <property type="project" value="UniProtKB"/>
</dbReference>
<dbReference type="GO" id="GO:0016020">
    <property type="term" value="C:membrane"/>
    <property type="evidence" value="ECO:0000314"/>
    <property type="project" value="ARUK-UCL"/>
</dbReference>
<dbReference type="GO" id="GO:0043209">
    <property type="term" value="C:myelin sheath"/>
    <property type="evidence" value="ECO:0000314"/>
    <property type="project" value="UniProtKB"/>
</dbReference>
<dbReference type="GO" id="GO:0098984">
    <property type="term" value="C:neuron to neuron synapse"/>
    <property type="evidence" value="ECO:0000266"/>
    <property type="project" value="RGD"/>
</dbReference>
<dbReference type="GO" id="GO:0043025">
    <property type="term" value="C:neuronal cell body"/>
    <property type="evidence" value="ECO:0000266"/>
    <property type="project" value="RGD"/>
</dbReference>
<dbReference type="GO" id="GO:0005634">
    <property type="term" value="C:nucleus"/>
    <property type="evidence" value="ECO:0000266"/>
    <property type="project" value="RGD"/>
</dbReference>
<dbReference type="GO" id="GO:0031090">
    <property type="term" value="C:organelle membrane"/>
    <property type="evidence" value="ECO:0000266"/>
    <property type="project" value="RGD"/>
</dbReference>
<dbReference type="GO" id="GO:0001917">
    <property type="term" value="C:photoreceptor inner segment"/>
    <property type="evidence" value="ECO:0000266"/>
    <property type="project" value="RGD"/>
</dbReference>
<dbReference type="GO" id="GO:0005886">
    <property type="term" value="C:plasma membrane"/>
    <property type="evidence" value="ECO:0000250"/>
    <property type="project" value="UniProtKB"/>
</dbReference>
<dbReference type="GO" id="GO:0098794">
    <property type="term" value="C:postsynapse"/>
    <property type="evidence" value="ECO:0000314"/>
    <property type="project" value="SynGO"/>
</dbReference>
<dbReference type="GO" id="GO:0042734">
    <property type="term" value="C:presynaptic membrane"/>
    <property type="evidence" value="ECO:0000314"/>
    <property type="project" value="SynGO"/>
</dbReference>
<dbReference type="GO" id="GO:0032991">
    <property type="term" value="C:protein-containing complex"/>
    <property type="evidence" value="ECO:0000266"/>
    <property type="project" value="RGD"/>
</dbReference>
<dbReference type="GO" id="GO:0042383">
    <property type="term" value="C:sarcolemma"/>
    <property type="evidence" value="ECO:0000266"/>
    <property type="project" value="RGD"/>
</dbReference>
<dbReference type="GO" id="GO:0005890">
    <property type="term" value="C:sodium:potassium-exchanging ATPase complex"/>
    <property type="evidence" value="ECO:0000314"/>
    <property type="project" value="RGD"/>
</dbReference>
<dbReference type="GO" id="GO:0045202">
    <property type="term" value="C:synapse"/>
    <property type="evidence" value="ECO:0000314"/>
    <property type="project" value="UniProtKB"/>
</dbReference>
<dbReference type="GO" id="GO:0001540">
    <property type="term" value="F:amyloid-beta binding"/>
    <property type="evidence" value="ECO:0000314"/>
    <property type="project" value="ARUK-UCL"/>
</dbReference>
<dbReference type="GO" id="GO:0005524">
    <property type="term" value="F:ATP binding"/>
    <property type="evidence" value="ECO:0007669"/>
    <property type="project" value="UniProtKB-KW"/>
</dbReference>
<dbReference type="GO" id="GO:0016887">
    <property type="term" value="F:ATP hydrolysis activity"/>
    <property type="evidence" value="ECO:0007669"/>
    <property type="project" value="InterPro"/>
</dbReference>
<dbReference type="GO" id="GO:0031748">
    <property type="term" value="F:D1 dopamine receptor binding"/>
    <property type="evidence" value="ECO:0000353"/>
    <property type="project" value="RGD"/>
</dbReference>
<dbReference type="GO" id="GO:0043395">
    <property type="term" value="F:heparan sulfate proteoglycan binding"/>
    <property type="evidence" value="ECO:0000266"/>
    <property type="project" value="RGD"/>
</dbReference>
<dbReference type="GO" id="GO:0046872">
    <property type="term" value="F:metal ion binding"/>
    <property type="evidence" value="ECO:0007669"/>
    <property type="project" value="UniProtKB-KW"/>
</dbReference>
<dbReference type="GO" id="GO:0005391">
    <property type="term" value="F:P-type sodium:potassium-exchanging transporter activity"/>
    <property type="evidence" value="ECO:0000250"/>
    <property type="project" value="UniProtKB"/>
</dbReference>
<dbReference type="GO" id="GO:0086037">
    <property type="term" value="F:P-type sodium:potassium-exchanging transporter activity involved in regulation of cardiac muscle cell membrane potential"/>
    <property type="evidence" value="ECO:0000266"/>
    <property type="project" value="RGD"/>
</dbReference>
<dbReference type="GO" id="GO:0051087">
    <property type="term" value="F:protein-folding chaperone binding"/>
    <property type="evidence" value="ECO:0000266"/>
    <property type="project" value="RGD"/>
</dbReference>
<dbReference type="GO" id="GO:0008344">
    <property type="term" value="P:adult locomotory behavior"/>
    <property type="evidence" value="ECO:0000266"/>
    <property type="project" value="RGD"/>
</dbReference>
<dbReference type="GO" id="GO:0008015">
    <property type="term" value="P:blood circulation"/>
    <property type="evidence" value="ECO:0000266"/>
    <property type="project" value="RGD"/>
</dbReference>
<dbReference type="GO" id="GO:0031547">
    <property type="term" value="P:brain-derived neurotrophic factor receptor signaling pathway"/>
    <property type="evidence" value="ECO:0000266"/>
    <property type="project" value="RGD"/>
</dbReference>
<dbReference type="GO" id="GO:0019722">
    <property type="term" value="P:calcium-mediated signaling"/>
    <property type="evidence" value="ECO:0000266"/>
    <property type="project" value="RGD"/>
</dbReference>
<dbReference type="GO" id="GO:0046942">
    <property type="term" value="P:carboxylic acid transport"/>
    <property type="evidence" value="ECO:0000266"/>
    <property type="project" value="RGD"/>
</dbReference>
<dbReference type="GO" id="GO:0060048">
    <property type="term" value="P:cardiac muscle contraction"/>
    <property type="evidence" value="ECO:0000266"/>
    <property type="project" value="RGD"/>
</dbReference>
<dbReference type="GO" id="GO:1904646">
    <property type="term" value="P:cellular response to amyloid-beta"/>
    <property type="evidence" value="ECO:0000314"/>
    <property type="project" value="ARUK-UCL"/>
</dbReference>
<dbReference type="GO" id="GO:0071300">
    <property type="term" value="P:cellular response to retinoic acid"/>
    <property type="evidence" value="ECO:0000270"/>
    <property type="project" value="RGD"/>
</dbReference>
<dbReference type="GO" id="GO:0097067">
    <property type="term" value="P:cellular response to thyroid hormone stimulus"/>
    <property type="evidence" value="ECO:0000270"/>
    <property type="project" value="RGD"/>
</dbReference>
<dbReference type="GO" id="GO:0021987">
    <property type="term" value="P:cerebral cortex development"/>
    <property type="evidence" value="ECO:0000270"/>
    <property type="project" value="RGD"/>
</dbReference>
<dbReference type="GO" id="GO:0007623">
    <property type="term" value="P:circadian rhythm"/>
    <property type="evidence" value="ECO:0000266"/>
    <property type="project" value="RGD"/>
</dbReference>
<dbReference type="GO" id="GO:0050890">
    <property type="term" value="P:cognition"/>
    <property type="evidence" value="ECO:0000266"/>
    <property type="project" value="RGD"/>
</dbReference>
<dbReference type="GO" id="GO:0008340">
    <property type="term" value="P:determination of adult lifespan"/>
    <property type="evidence" value="ECO:0000266"/>
    <property type="project" value="RGD"/>
</dbReference>
<dbReference type="GO" id="GO:0070371">
    <property type="term" value="P:ERK1 and ERK2 cascade"/>
    <property type="evidence" value="ECO:0000266"/>
    <property type="project" value="RGD"/>
</dbReference>
<dbReference type="GO" id="GO:0042596">
    <property type="term" value="P:fear response"/>
    <property type="evidence" value="ECO:0000266"/>
    <property type="project" value="RGD"/>
</dbReference>
<dbReference type="GO" id="GO:0007214">
    <property type="term" value="P:gamma-aminobutyric acid signaling pathway"/>
    <property type="evidence" value="ECO:0000266"/>
    <property type="project" value="RGD"/>
</dbReference>
<dbReference type="GO" id="GO:0046959">
    <property type="term" value="P:habituation"/>
    <property type="evidence" value="ECO:0000266"/>
    <property type="project" value="RGD"/>
</dbReference>
<dbReference type="GO" id="GO:0030007">
    <property type="term" value="P:intracellular potassium ion homeostasis"/>
    <property type="evidence" value="ECO:0000266"/>
    <property type="project" value="RGD"/>
</dbReference>
<dbReference type="GO" id="GO:0006883">
    <property type="term" value="P:intracellular sodium ion homeostasis"/>
    <property type="evidence" value="ECO:0000266"/>
    <property type="project" value="RGD"/>
</dbReference>
<dbReference type="GO" id="GO:0035235">
    <property type="term" value="P:ionotropic glutamate receptor signaling pathway"/>
    <property type="evidence" value="ECO:0000266"/>
    <property type="project" value="RGD"/>
</dbReference>
<dbReference type="GO" id="GO:0019852">
    <property type="term" value="P:L-ascorbic acid metabolic process"/>
    <property type="evidence" value="ECO:0000266"/>
    <property type="project" value="RGD"/>
</dbReference>
<dbReference type="GO" id="GO:0007612">
    <property type="term" value="P:learning"/>
    <property type="evidence" value="ECO:0000266"/>
    <property type="project" value="RGD"/>
</dbReference>
<dbReference type="GO" id="GO:0040011">
    <property type="term" value="P:locomotion"/>
    <property type="evidence" value="ECO:0000266"/>
    <property type="project" value="RGD"/>
</dbReference>
<dbReference type="GO" id="GO:0007626">
    <property type="term" value="P:locomotory behavior"/>
    <property type="evidence" value="ECO:0000266"/>
    <property type="project" value="RGD"/>
</dbReference>
<dbReference type="GO" id="GO:0051899">
    <property type="term" value="P:membrane depolarization"/>
    <property type="evidence" value="ECO:0000266"/>
    <property type="project" value="RGD"/>
</dbReference>
<dbReference type="GO" id="GO:0007613">
    <property type="term" value="P:memory"/>
    <property type="evidence" value="ECO:0000266"/>
    <property type="project" value="RGD"/>
</dbReference>
<dbReference type="GO" id="GO:0061744">
    <property type="term" value="P:motor behavior"/>
    <property type="evidence" value="ECO:0000266"/>
    <property type="project" value="RGD"/>
</dbReference>
<dbReference type="GO" id="GO:0035264">
    <property type="term" value="P:multicellular organism growth"/>
    <property type="evidence" value="ECO:0000266"/>
    <property type="project" value="RGD"/>
</dbReference>
<dbReference type="GO" id="GO:0022008">
    <property type="term" value="P:neurogenesis"/>
    <property type="evidence" value="ECO:0000266"/>
    <property type="project" value="RGD"/>
</dbReference>
<dbReference type="GO" id="GO:0050905">
    <property type="term" value="P:neuromuscular process"/>
    <property type="evidence" value="ECO:0000266"/>
    <property type="project" value="RGD"/>
</dbReference>
<dbReference type="GO" id="GO:0050885">
    <property type="term" value="P:neuromuscular process controlling balance"/>
    <property type="evidence" value="ECO:0000266"/>
    <property type="project" value="RGD"/>
</dbReference>
<dbReference type="GO" id="GO:1990535">
    <property type="term" value="P:neuron projection maintenance"/>
    <property type="evidence" value="ECO:0000266"/>
    <property type="project" value="RGD"/>
</dbReference>
<dbReference type="GO" id="GO:0043491">
    <property type="term" value="P:phosphatidylinositol 3-kinase/protein kinase B signal transduction"/>
    <property type="evidence" value="ECO:0000266"/>
    <property type="project" value="RGD"/>
</dbReference>
<dbReference type="GO" id="GO:0046931">
    <property type="term" value="P:pore complex assembly"/>
    <property type="evidence" value="ECO:0000266"/>
    <property type="project" value="RGD"/>
</dbReference>
<dbReference type="GO" id="GO:1990573">
    <property type="term" value="P:potassium ion import across plasma membrane"/>
    <property type="evidence" value="ECO:0000266"/>
    <property type="project" value="RGD"/>
</dbReference>
<dbReference type="GO" id="GO:0006813">
    <property type="term" value="P:potassium ion transport"/>
    <property type="evidence" value="ECO:0000314"/>
    <property type="project" value="RGD"/>
</dbReference>
<dbReference type="GO" id="GO:1902600">
    <property type="term" value="P:proton transmembrane transport"/>
    <property type="evidence" value="ECO:0000318"/>
    <property type="project" value="GO_Central"/>
</dbReference>
<dbReference type="GO" id="GO:0086036">
    <property type="term" value="P:regulation of cardiac muscle cell membrane potential"/>
    <property type="evidence" value="ECO:0000266"/>
    <property type="project" value="RGD"/>
</dbReference>
<dbReference type="GO" id="GO:0048172">
    <property type="term" value="P:regulation of short-term neuronal synaptic plasticity"/>
    <property type="evidence" value="ECO:0000266"/>
    <property type="project" value="RGD"/>
</dbReference>
<dbReference type="GO" id="GO:0014823">
    <property type="term" value="P:response to activity"/>
    <property type="evidence" value="ECO:0000266"/>
    <property type="project" value="RGD"/>
</dbReference>
<dbReference type="GO" id="GO:0051602">
    <property type="term" value="P:response to electrical stimulus"/>
    <property type="evidence" value="ECO:0000266"/>
    <property type="project" value="RGD"/>
</dbReference>
<dbReference type="GO" id="GO:0090648">
    <property type="term" value="P:response to environmental enrichment"/>
    <property type="evidence" value="ECO:0000266"/>
    <property type="project" value="RGD"/>
</dbReference>
<dbReference type="GO" id="GO:0009725">
    <property type="term" value="P:response to hormone"/>
    <property type="evidence" value="ECO:0000266"/>
    <property type="project" value="RGD"/>
</dbReference>
<dbReference type="GO" id="GO:0035902">
    <property type="term" value="P:response to immobilization stress"/>
    <property type="evidence" value="ECO:0000266"/>
    <property type="project" value="RGD"/>
</dbReference>
<dbReference type="GO" id="GO:0010226">
    <property type="term" value="P:response to lithium ion"/>
    <property type="evidence" value="ECO:0000266"/>
    <property type="project" value="RGD"/>
</dbReference>
<dbReference type="GO" id="GO:1904313">
    <property type="term" value="P:response to methamphetamine hydrochloride"/>
    <property type="evidence" value="ECO:0000266"/>
    <property type="project" value="RGD"/>
</dbReference>
<dbReference type="GO" id="GO:0071867">
    <property type="term" value="P:response to monoamine"/>
    <property type="evidence" value="ECO:0000266"/>
    <property type="project" value="RGD"/>
</dbReference>
<dbReference type="GO" id="GO:0035864">
    <property type="term" value="P:response to potassium ion"/>
    <property type="evidence" value="ECO:0000266"/>
    <property type="project" value="RGD"/>
</dbReference>
<dbReference type="GO" id="GO:0006950">
    <property type="term" value="P:response to stress"/>
    <property type="evidence" value="ECO:0000266"/>
    <property type="project" value="RGD"/>
</dbReference>
<dbReference type="GO" id="GO:0009266">
    <property type="term" value="P:response to temperature stimulus"/>
    <property type="evidence" value="ECO:0000266"/>
    <property type="project" value="RGD"/>
</dbReference>
<dbReference type="GO" id="GO:0009410">
    <property type="term" value="P:response to xenobiotic stimulus"/>
    <property type="evidence" value="ECO:0000266"/>
    <property type="project" value="RGD"/>
</dbReference>
<dbReference type="GO" id="GO:0030431">
    <property type="term" value="P:sleep"/>
    <property type="evidence" value="ECO:0000266"/>
    <property type="project" value="RGD"/>
</dbReference>
<dbReference type="GO" id="GO:0035176">
    <property type="term" value="P:social behavior"/>
    <property type="evidence" value="ECO:0000266"/>
    <property type="project" value="RGD"/>
</dbReference>
<dbReference type="GO" id="GO:0036376">
    <property type="term" value="P:sodium ion export across plasma membrane"/>
    <property type="evidence" value="ECO:0000266"/>
    <property type="project" value="RGD"/>
</dbReference>
<dbReference type="GO" id="GO:0006814">
    <property type="term" value="P:sodium ion transport"/>
    <property type="evidence" value="ECO:0000314"/>
    <property type="project" value="RGD"/>
</dbReference>
<dbReference type="GO" id="GO:0021794">
    <property type="term" value="P:thalamus development"/>
    <property type="evidence" value="ECO:0000266"/>
    <property type="project" value="RGD"/>
</dbReference>
<dbReference type="GO" id="GO:0019226">
    <property type="term" value="P:transmission of nerve impulse"/>
    <property type="evidence" value="ECO:0000266"/>
    <property type="project" value="RGD"/>
</dbReference>
<dbReference type="GO" id="GO:0008542">
    <property type="term" value="P:visual learning"/>
    <property type="evidence" value="ECO:0000266"/>
    <property type="project" value="RGD"/>
</dbReference>
<dbReference type="GO" id="GO:0090659">
    <property type="term" value="P:walking behavior"/>
    <property type="evidence" value="ECO:0000266"/>
    <property type="project" value="RGD"/>
</dbReference>
<dbReference type="CDD" id="cd02608">
    <property type="entry name" value="P-type_ATPase_Na-K_like"/>
    <property type="match status" value="1"/>
</dbReference>
<dbReference type="FunFam" id="2.70.150.10:FF:000106">
    <property type="entry name" value="Sodium/potassium-transporting ATPase subunit alpha"/>
    <property type="match status" value="1"/>
</dbReference>
<dbReference type="FunFam" id="3.40.1110.10:FF:000001">
    <property type="entry name" value="Sodium/potassium-transporting ATPase subunit alpha"/>
    <property type="match status" value="1"/>
</dbReference>
<dbReference type="FunFam" id="3.40.50.1000:FF:000004">
    <property type="entry name" value="Sodium/potassium-transporting ATPase subunit alpha"/>
    <property type="match status" value="1"/>
</dbReference>
<dbReference type="FunFam" id="1.20.1110.10:FF:000095">
    <property type="entry name" value="Sodium/potassium-transporting ATPase subunit alpha-1"/>
    <property type="match status" value="2"/>
</dbReference>
<dbReference type="Gene3D" id="3.40.1110.10">
    <property type="entry name" value="Calcium-transporting ATPase, cytoplasmic domain N"/>
    <property type="match status" value="1"/>
</dbReference>
<dbReference type="Gene3D" id="2.70.150.10">
    <property type="entry name" value="Calcium-transporting ATPase, cytoplasmic transduction domain A"/>
    <property type="match status" value="1"/>
</dbReference>
<dbReference type="Gene3D" id="1.20.1110.10">
    <property type="entry name" value="Calcium-transporting ATPase, transmembrane domain"/>
    <property type="match status" value="1"/>
</dbReference>
<dbReference type="Gene3D" id="3.40.50.1000">
    <property type="entry name" value="HAD superfamily/HAD-like"/>
    <property type="match status" value="1"/>
</dbReference>
<dbReference type="InterPro" id="IPR006068">
    <property type="entry name" value="ATPase_P-typ_cation-transptr_C"/>
</dbReference>
<dbReference type="InterPro" id="IPR004014">
    <property type="entry name" value="ATPase_P-typ_cation-transptr_N"/>
</dbReference>
<dbReference type="InterPro" id="IPR023299">
    <property type="entry name" value="ATPase_P-typ_cyto_dom_N"/>
</dbReference>
<dbReference type="InterPro" id="IPR018303">
    <property type="entry name" value="ATPase_P-typ_P_site"/>
</dbReference>
<dbReference type="InterPro" id="IPR023298">
    <property type="entry name" value="ATPase_P-typ_TM_dom_sf"/>
</dbReference>
<dbReference type="InterPro" id="IPR008250">
    <property type="entry name" value="ATPase_P-typ_transduc_dom_A_sf"/>
</dbReference>
<dbReference type="InterPro" id="IPR050510">
    <property type="entry name" value="Cation_transp_ATPase_P-type"/>
</dbReference>
<dbReference type="InterPro" id="IPR036412">
    <property type="entry name" value="HAD-like_sf"/>
</dbReference>
<dbReference type="InterPro" id="IPR023214">
    <property type="entry name" value="HAD_sf"/>
</dbReference>
<dbReference type="InterPro" id="IPR005775">
    <property type="entry name" value="P-type_ATPase_IIC"/>
</dbReference>
<dbReference type="InterPro" id="IPR001757">
    <property type="entry name" value="P_typ_ATPase"/>
</dbReference>
<dbReference type="InterPro" id="IPR044492">
    <property type="entry name" value="P_typ_ATPase_HD_dom"/>
</dbReference>
<dbReference type="NCBIfam" id="TIGR01106">
    <property type="entry name" value="ATPase-IIC_X-K"/>
    <property type="match status" value="1"/>
</dbReference>
<dbReference type="NCBIfam" id="TIGR01494">
    <property type="entry name" value="ATPase_P-type"/>
    <property type="match status" value="2"/>
</dbReference>
<dbReference type="PANTHER" id="PTHR43294">
    <property type="entry name" value="SODIUM/POTASSIUM-TRANSPORTING ATPASE SUBUNIT ALPHA"/>
    <property type="match status" value="1"/>
</dbReference>
<dbReference type="PANTHER" id="PTHR43294:SF15">
    <property type="entry name" value="SODIUM_POTASSIUM-TRANSPORTING ATPASE SUBUNIT ALPHA-3"/>
    <property type="match status" value="1"/>
</dbReference>
<dbReference type="Pfam" id="PF13246">
    <property type="entry name" value="Cation_ATPase"/>
    <property type="match status" value="1"/>
</dbReference>
<dbReference type="Pfam" id="PF00689">
    <property type="entry name" value="Cation_ATPase_C"/>
    <property type="match status" value="1"/>
</dbReference>
<dbReference type="Pfam" id="PF00690">
    <property type="entry name" value="Cation_ATPase_N"/>
    <property type="match status" value="1"/>
</dbReference>
<dbReference type="Pfam" id="PF00122">
    <property type="entry name" value="E1-E2_ATPase"/>
    <property type="match status" value="1"/>
</dbReference>
<dbReference type="PRINTS" id="PR00119">
    <property type="entry name" value="CATATPASE"/>
</dbReference>
<dbReference type="PRINTS" id="PR00121">
    <property type="entry name" value="NAKATPASE"/>
</dbReference>
<dbReference type="SFLD" id="SFLDG00002">
    <property type="entry name" value="C1.7:_P-type_atpase_like"/>
    <property type="match status" value="1"/>
</dbReference>
<dbReference type="SFLD" id="SFLDF00027">
    <property type="entry name" value="p-type_atpase"/>
    <property type="match status" value="1"/>
</dbReference>
<dbReference type="SMART" id="SM00831">
    <property type="entry name" value="Cation_ATPase_N"/>
    <property type="match status" value="1"/>
</dbReference>
<dbReference type="SUPFAM" id="SSF81653">
    <property type="entry name" value="Calcium ATPase, transduction domain A"/>
    <property type="match status" value="1"/>
</dbReference>
<dbReference type="SUPFAM" id="SSF81665">
    <property type="entry name" value="Calcium ATPase, transmembrane domain M"/>
    <property type="match status" value="1"/>
</dbReference>
<dbReference type="SUPFAM" id="SSF56784">
    <property type="entry name" value="HAD-like"/>
    <property type="match status" value="1"/>
</dbReference>
<dbReference type="SUPFAM" id="SSF81660">
    <property type="entry name" value="Metal cation-transporting ATPase, ATP-binding domain N"/>
    <property type="match status" value="1"/>
</dbReference>
<dbReference type="PROSITE" id="PS00154">
    <property type="entry name" value="ATPASE_E1_E2"/>
    <property type="match status" value="1"/>
</dbReference>
<feature type="chain" id="PRO_0000046300" description="Sodium/potassium-transporting ATPase subunit alpha-3">
    <location>
        <begin position="1"/>
        <end position="1013"/>
    </location>
</feature>
<feature type="topological domain" description="Cytoplasmic" evidence="3">
    <location>
        <begin position="1"/>
        <end position="77"/>
    </location>
</feature>
<feature type="transmembrane region" description="Helical" evidence="3">
    <location>
        <begin position="78"/>
        <end position="98"/>
    </location>
</feature>
<feature type="topological domain" description="Extracellular" evidence="3">
    <location>
        <begin position="99"/>
        <end position="121"/>
    </location>
</feature>
<feature type="transmembrane region" description="Helical" evidence="3">
    <location>
        <begin position="122"/>
        <end position="142"/>
    </location>
</feature>
<feature type="topological domain" description="Cytoplasmic" evidence="3">
    <location>
        <begin position="143"/>
        <end position="278"/>
    </location>
</feature>
<feature type="transmembrane region" description="Helical" evidence="3">
    <location>
        <begin position="279"/>
        <end position="298"/>
    </location>
</feature>
<feature type="topological domain" description="Extracellular" evidence="3">
    <location>
        <begin position="299"/>
        <end position="310"/>
    </location>
</feature>
<feature type="transmembrane region" description="Helical" evidence="3">
    <location>
        <begin position="311"/>
        <end position="328"/>
    </location>
</feature>
<feature type="topological domain" description="Cytoplasmic" evidence="3">
    <location>
        <begin position="329"/>
        <end position="762"/>
    </location>
</feature>
<feature type="transmembrane region" description="Helical" evidence="3">
    <location>
        <begin position="763"/>
        <end position="782"/>
    </location>
</feature>
<feature type="topological domain" description="Extracellular" evidence="3">
    <location>
        <begin position="783"/>
        <end position="792"/>
    </location>
</feature>
<feature type="transmembrane region" description="Helical" evidence="3">
    <location>
        <begin position="793"/>
        <end position="813"/>
    </location>
</feature>
<feature type="topological domain" description="Cytoplasmic" evidence="3">
    <location>
        <begin position="814"/>
        <end position="833"/>
    </location>
</feature>
<feature type="transmembrane region" description="Helical" evidence="3">
    <location>
        <begin position="834"/>
        <end position="856"/>
    </location>
</feature>
<feature type="topological domain" description="Extracellular" evidence="3">
    <location>
        <begin position="857"/>
        <end position="908"/>
    </location>
</feature>
<feature type="transmembrane region" description="Helical" evidence="3">
    <location>
        <begin position="909"/>
        <end position="928"/>
    </location>
</feature>
<feature type="topological domain" description="Cytoplasmic" evidence="3">
    <location>
        <begin position="929"/>
        <end position="941"/>
    </location>
</feature>
<feature type="transmembrane region" description="Helical" evidence="3">
    <location>
        <begin position="942"/>
        <end position="960"/>
    </location>
</feature>
<feature type="topological domain" description="Extracellular" evidence="3">
    <location>
        <begin position="961"/>
        <end position="975"/>
    </location>
</feature>
<feature type="transmembrane region" description="Helical" evidence="3">
    <location>
        <begin position="976"/>
        <end position="996"/>
    </location>
</feature>
<feature type="topological domain" description="Cytoplasmic" evidence="3">
    <location>
        <begin position="997"/>
        <end position="1013"/>
    </location>
</feature>
<feature type="region of interest" description="Disordered" evidence="4">
    <location>
        <begin position="1"/>
        <end position="24"/>
    </location>
</feature>
<feature type="region of interest" description="Interaction with phosphoinositide-3 kinase" evidence="1">
    <location>
        <begin position="72"/>
        <end position="74"/>
    </location>
</feature>
<feature type="compositionally biased region" description="Basic and acidic residues" evidence="4">
    <location>
        <begin position="1"/>
        <end position="10"/>
    </location>
</feature>
<feature type="active site" description="4-aspartylphosphate intermediate" evidence="1">
    <location>
        <position position="366"/>
    </location>
</feature>
<feature type="binding site" evidence="1">
    <location>
        <position position="707"/>
    </location>
    <ligand>
        <name>Mg(2+)</name>
        <dbReference type="ChEBI" id="CHEBI:18420"/>
    </ligand>
</feature>
<feature type="binding site" evidence="1">
    <location>
        <position position="711"/>
    </location>
    <ligand>
        <name>Mg(2+)</name>
        <dbReference type="ChEBI" id="CHEBI:18420"/>
    </ligand>
</feature>
<feature type="modified residue" description="Phosphoserine" evidence="7">
    <location>
        <position position="37"/>
    </location>
</feature>
<feature type="modified residue" description="Phosphoserine" evidence="2">
    <location>
        <position position="56"/>
    </location>
</feature>
<feature type="modified residue" description="Phosphoserine" evidence="7">
    <location>
        <position position="218"/>
    </location>
</feature>
<feature type="modified residue" description="Phosphoserine" evidence="2">
    <location>
        <position position="265"/>
    </location>
</feature>
<feature type="modified residue" description="Phosphoserine" evidence="7">
    <location>
        <position position="442"/>
    </location>
</feature>
<feature type="modified residue" description="Phosphotyrosine" evidence="2">
    <location>
        <position position="548"/>
    </location>
</feature>
<feature type="modified residue" description="Phosphoserine; by PKA" evidence="1">
    <location>
        <position position="933"/>
    </location>
</feature>
<feature type="sequence conflict" description="In Ref. 3; AAA41672." evidence="6" ref="3">
    <original>MGD</original>
    <variation>MNL</variation>
    <location>
        <begin position="1"/>
        <end position="3"/>
    </location>
</feature>
<feature type="sequence conflict" description="In Ref. 3; AAA41672." evidence="6" ref="3">
    <original>A</original>
    <variation>R</variation>
    <location>
        <position position="104"/>
    </location>
</feature>
<feature type="sequence conflict" description="In Ref. 3; AAA41672." evidence="6" ref="3">
    <original>D</original>
    <variation>E</variation>
    <location>
        <position position="114"/>
    </location>
</feature>
<feature type="sequence conflict" description="In Ref. 3; AAA41672." evidence="6" ref="3">
    <original>A</original>
    <variation>G</variation>
    <location>
        <position position="128"/>
    </location>
</feature>
<feature type="sequence conflict" description="In Ref. 3; AAA41672." evidence="6" ref="3">
    <original>E</original>
    <variation>Q</variation>
    <location>
        <position position="149"/>
    </location>
</feature>
<feature type="sequence conflict" description="In Ref. 3; AAA41672." evidence="6" ref="3">
    <original>K</original>
    <variation>T</variation>
    <location>
        <position position="152"/>
    </location>
</feature>
<feature type="sequence conflict" description="In Ref. 3; AAA41672." evidence="6" ref="3">
    <original>E</original>
    <variation>D</variation>
    <location>
        <position position="166"/>
    </location>
</feature>
<feature type="sequence conflict" description="In Ref. 3; AAA41672." evidence="6" ref="3">
    <original>DLR</original>
    <variation>ELG</variation>
    <location>
        <begin position="192"/>
        <end position="194"/>
    </location>
</feature>
<feature type="sequence conflict" description="In Ref. 3; AAA41672." evidence="6" ref="3">
    <original>G</original>
    <variation>R</variation>
    <location>
        <position position="200"/>
    </location>
</feature>
<feature type="sequence conflict" description="In Ref. 3; AAA41672." evidence="6" ref="3">
    <location>
        <position position="339"/>
    </location>
</feature>
<feature type="sequence conflict" description="In Ref. 3; AAA41672." evidence="6" ref="3">
    <original>V</original>
    <variation>K</variation>
    <location>
        <position position="621"/>
    </location>
</feature>
<feature type="sequence conflict" description="In Ref. 3; AAA41672." evidence="6" ref="3">
    <original>VPA</original>
    <variation>DPT</variation>
    <location>
        <begin position="807"/>
        <end position="809"/>
    </location>
</feature>
<feature type="sequence conflict" description="In Ref. 1; AAA40777." evidence="6" ref="1">
    <original>C</original>
    <variation>F</variation>
    <location>
        <position position="908"/>
    </location>
</feature>
<gene>
    <name type="primary">Atp1a3</name>
</gene>
<accession>P06687</accession>
<accession>Q16732</accession>
<accession>Q9Z1G6</accession>
<organism>
    <name type="scientific">Rattus norvegicus</name>
    <name type="common">Rat</name>
    <dbReference type="NCBI Taxonomy" id="10116"/>
    <lineage>
        <taxon>Eukaryota</taxon>
        <taxon>Metazoa</taxon>
        <taxon>Chordata</taxon>
        <taxon>Craniata</taxon>
        <taxon>Vertebrata</taxon>
        <taxon>Euteleostomi</taxon>
        <taxon>Mammalia</taxon>
        <taxon>Eutheria</taxon>
        <taxon>Euarchontoglires</taxon>
        <taxon>Glires</taxon>
        <taxon>Rodentia</taxon>
        <taxon>Myomorpha</taxon>
        <taxon>Muroidea</taxon>
        <taxon>Muridae</taxon>
        <taxon>Murinae</taxon>
        <taxon>Rattus</taxon>
    </lineage>
</organism>
<sequence length="1013" mass="111692">MGDKKDDKSSPKKSKAKERRDLDDLKKEVAMTEHKMSVEEVCRKYNTDCVQGLTHSKAQEILARDGPNALTPPPTTPEWVKFCRQLFGGFSILLWIGAILCFLAYGIQAGTEDDPSGDNLYLGIVLAAVVIITGCFSYYQEAKSSKIMESFKNMVPQQALVIREGEKMQVNAEEVVVGDLVEIKGGDRVPADLRIISAHGCKVDNSSLTGESEPQTRSPDCTHDNPLETRNITFFSTNCVEGTARGVVVATGDRTVMGRIATLASGLEVGKTPIAIEIEHFIQLITGVAVFLGVSFFILSLILGYTWLEAVIFLIGIIVANVPEGLLATVTVCLTLTAKRMARKNCLVKNLEAVETLGSTSTICSDKTGTLTQNRMTVAHMWFDNQIHEADTTEDQSGTSFDKSSHTWVALSHIAGLCNRAVFKGGQDNIPVLKRDVAGDASESALLKCIELSSGSVKLMRERNKKVAEIPFNSTNKYQLSIHETEDPNDNRYLLVMKGAPERILDRCATILLQGKEQPLDEEMKEAFQNAYLELGGLGERVLGFCHYYLPEEQFPKGFAFDCDDVNFTTDNLCFVGLMSMIDPPRAAVPDAVGKCRSAGIKVIMVTGDHPITAKAIAKGVGIISEGNETVEDIAARLNIPVSQVNPRDAKACVIHGTDLKDFTSEQIDEILQNHTEIVFARTSPQQKLIIVEGCQRQGAIVAVTGDGVNDSPALKKADIGVAMGIAGSDVSKQAADMILLDDNFASIVTGVEEGRLIFDNLKKSIAYTLTSNIPEITPFLLFIMANIPLPLGTITILCIDLGTDMVPAISLAYEAAESDIMKRQPRNPRTDKLVNERLISMAYGQIGMIQALGGFFSYFVILAENGFLPGNLVGIRLNWDDRTVNDLEDSYGQQWTYEQRKVVEFTCHTAFFVSIVVVQWADLIICKTRRNSVFQQGMKNKILIFGLFEETALAAFLSYCPGMDVALRMYPLKPSWWFCAFPYSFLIFVYDEIRKLILRRNPGGWVEKETYY</sequence>
<protein>
    <recommendedName>
        <fullName>Sodium/potassium-transporting ATPase subunit alpha-3</fullName>
        <shortName>Na(+)/K(+) ATPase alpha-3 subunit</shortName>
        <ecNumber>7.2.2.13</ecNumber>
    </recommendedName>
    <alternativeName>
        <fullName>Na(+)/K(+) ATPase alpha(III) subunit</fullName>
    </alternativeName>
    <alternativeName>
        <fullName>Sodium pump subunit alpha-3</fullName>
    </alternativeName>
</protein>